<evidence type="ECO:0000255" key="1">
    <source>
        <dbReference type="HAMAP-Rule" id="MF_00008"/>
    </source>
</evidence>
<sequence>MKEYLDLLNLILKNGYPKIDRTKTGTLSMFGYQIRINLNEGFPLLTTKYCHFKSIVYELLWFLRGDTNISFLKKNNISIWNKWADKNGNLGPIYGKQWRAWEDKKNNTIDQIEIALNKLKKEPSSRRILVSSWNVGELDLMSIPPCHVLFQLYVINNKLSCQVYQRSCDIFLGLPFNIGSYALLTHIFANQCDLLVEDLIWTGGDIHLYKNHLNQAKLQLTRSPLPLPKIFIKKKPKNLFNYAFNDFLLIDYNHHPKIKAPISI</sequence>
<accession>Q8D2N4</accession>
<dbReference type="EC" id="2.1.1.45" evidence="1"/>
<dbReference type="EMBL" id="BA000021">
    <property type="protein sequence ID" value="BAC24466.1"/>
    <property type="molecule type" value="Genomic_DNA"/>
</dbReference>
<dbReference type="SMR" id="Q8D2N4"/>
<dbReference type="STRING" id="36870.gene:10368819"/>
<dbReference type="KEGG" id="wbr:thyA"/>
<dbReference type="eggNOG" id="COG0207">
    <property type="taxonomic scope" value="Bacteria"/>
</dbReference>
<dbReference type="HOGENOM" id="CLU_021669_0_0_6"/>
<dbReference type="OrthoDB" id="9774633at2"/>
<dbReference type="UniPathway" id="UPA00575"/>
<dbReference type="Proteomes" id="UP000000562">
    <property type="component" value="Chromosome"/>
</dbReference>
<dbReference type="GO" id="GO:0005829">
    <property type="term" value="C:cytosol"/>
    <property type="evidence" value="ECO:0007669"/>
    <property type="project" value="TreeGrafter"/>
</dbReference>
<dbReference type="GO" id="GO:0004799">
    <property type="term" value="F:thymidylate synthase activity"/>
    <property type="evidence" value="ECO:0007669"/>
    <property type="project" value="UniProtKB-UniRule"/>
</dbReference>
<dbReference type="GO" id="GO:0006231">
    <property type="term" value="P:dTMP biosynthetic process"/>
    <property type="evidence" value="ECO:0007669"/>
    <property type="project" value="UniProtKB-UniRule"/>
</dbReference>
<dbReference type="GO" id="GO:0006235">
    <property type="term" value="P:dTTP biosynthetic process"/>
    <property type="evidence" value="ECO:0007669"/>
    <property type="project" value="UniProtKB-UniRule"/>
</dbReference>
<dbReference type="GO" id="GO:0032259">
    <property type="term" value="P:methylation"/>
    <property type="evidence" value="ECO:0007669"/>
    <property type="project" value="UniProtKB-KW"/>
</dbReference>
<dbReference type="CDD" id="cd00351">
    <property type="entry name" value="TS_Pyrimidine_HMase"/>
    <property type="match status" value="1"/>
</dbReference>
<dbReference type="Gene3D" id="3.30.572.10">
    <property type="entry name" value="Thymidylate synthase/dCMP hydroxymethylase domain"/>
    <property type="match status" value="1"/>
</dbReference>
<dbReference type="HAMAP" id="MF_00008">
    <property type="entry name" value="Thymidy_synth_bact"/>
    <property type="match status" value="1"/>
</dbReference>
<dbReference type="InterPro" id="IPR045097">
    <property type="entry name" value="Thymidate_synth/dCMP_Mease"/>
</dbReference>
<dbReference type="InterPro" id="IPR023451">
    <property type="entry name" value="Thymidate_synth/dCMP_Mease_dom"/>
</dbReference>
<dbReference type="InterPro" id="IPR036926">
    <property type="entry name" value="Thymidate_synth/dCMP_Mease_sf"/>
</dbReference>
<dbReference type="InterPro" id="IPR000398">
    <property type="entry name" value="Thymidylate_synthase"/>
</dbReference>
<dbReference type="InterPro" id="IPR020940">
    <property type="entry name" value="Thymidylate_synthase_AS"/>
</dbReference>
<dbReference type="NCBIfam" id="NF002497">
    <property type="entry name" value="PRK01827.1-3"/>
    <property type="match status" value="1"/>
</dbReference>
<dbReference type="NCBIfam" id="NF002499">
    <property type="entry name" value="PRK01827.1-5"/>
    <property type="match status" value="1"/>
</dbReference>
<dbReference type="NCBIfam" id="TIGR03284">
    <property type="entry name" value="thym_sym"/>
    <property type="match status" value="2"/>
</dbReference>
<dbReference type="PANTHER" id="PTHR11548:SF9">
    <property type="entry name" value="THYMIDYLATE SYNTHASE"/>
    <property type="match status" value="1"/>
</dbReference>
<dbReference type="PANTHER" id="PTHR11548">
    <property type="entry name" value="THYMIDYLATE SYNTHASE 1"/>
    <property type="match status" value="1"/>
</dbReference>
<dbReference type="Pfam" id="PF00303">
    <property type="entry name" value="Thymidylat_synt"/>
    <property type="match status" value="1"/>
</dbReference>
<dbReference type="PRINTS" id="PR00108">
    <property type="entry name" value="THYMDSNTHASE"/>
</dbReference>
<dbReference type="SUPFAM" id="SSF55831">
    <property type="entry name" value="Thymidylate synthase/dCMP hydroxymethylase"/>
    <property type="match status" value="1"/>
</dbReference>
<dbReference type="PROSITE" id="PS00091">
    <property type="entry name" value="THYMIDYLATE_SYNTHASE"/>
    <property type="match status" value="1"/>
</dbReference>
<proteinExistence type="inferred from homology"/>
<keyword id="KW-0963">Cytoplasm</keyword>
<keyword id="KW-0489">Methyltransferase</keyword>
<keyword id="KW-0545">Nucleotide biosynthesis</keyword>
<keyword id="KW-1185">Reference proteome</keyword>
<keyword id="KW-0808">Transferase</keyword>
<feature type="chain" id="PRO_0000141044" description="Thymidylate synthase">
    <location>
        <begin position="1"/>
        <end position="264"/>
    </location>
</feature>
<feature type="active site" description="Nucleophile" evidence="1">
    <location>
        <position position="146"/>
    </location>
</feature>
<feature type="binding site" description="in other chain" evidence="1">
    <location>
        <position position="21"/>
    </location>
    <ligand>
        <name>dUMP</name>
        <dbReference type="ChEBI" id="CHEBI:246422"/>
        <note>ligand shared between dimeric partners</note>
    </ligand>
</feature>
<feature type="binding site" evidence="1">
    <location>
        <position position="51"/>
    </location>
    <ligand>
        <name>(6R)-5,10-methylene-5,6,7,8-tetrahydrofolate</name>
        <dbReference type="ChEBI" id="CHEBI:15636"/>
    </ligand>
</feature>
<feature type="binding site" evidence="1">
    <location>
        <begin position="126"/>
        <end position="127"/>
    </location>
    <ligand>
        <name>dUMP</name>
        <dbReference type="ChEBI" id="CHEBI:246422"/>
        <note>ligand shared between dimeric partners</note>
    </ligand>
</feature>
<feature type="binding site" description="in other chain" evidence="1">
    <location>
        <begin position="166"/>
        <end position="169"/>
    </location>
    <ligand>
        <name>dUMP</name>
        <dbReference type="ChEBI" id="CHEBI:246422"/>
        <note>ligand shared between dimeric partners</note>
    </ligand>
</feature>
<feature type="binding site" evidence="1">
    <location>
        <position position="169"/>
    </location>
    <ligand>
        <name>(6R)-5,10-methylene-5,6,7,8-tetrahydrofolate</name>
        <dbReference type="ChEBI" id="CHEBI:15636"/>
    </ligand>
</feature>
<feature type="binding site" description="in other chain" evidence="1">
    <location>
        <position position="177"/>
    </location>
    <ligand>
        <name>dUMP</name>
        <dbReference type="ChEBI" id="CHEBI:246422"/>
        <note>ligand shared between dimeric partners</note>
    </ligand>
</feature>
<feature type="binding site" description="in other chain" evidence="1">
    <location>
        <begin position="207"/>
        <end position="209"/>
    </location>
    <ligand>
        <name>dUMP</name>
        <dbReference type="ChEBI" id="CHEBI:246422"/>
        <note>ligand shared between dimeric partners</note>
    </ligand>
</feature>
<feature type="binding site" evidence="1">
    <location>
        <position position="263"/>
    </location>
    <ligand>
        <name>(6R)-5,10-methylene-5,6,7,8-tetrahydrofolate</name>
        <dbReference type="ChEBI" id="CHEBI:15636"/>
    </ligand>
</feature>
<reference key="1">
    <citation type="journal article" date="2002" name="Nat. Genet.">
        <title>Genome sequence of the endocellular obligate symbiont of tsetse flies, Wigglesworthia glossinidia.</title>
        <authorList>
            <person name="Akman L."/>
            <person name="Yamashita A."/>
            <person name="Watanabe H."/>
            <person name="Oshima K."/>
            <person name="Shiba T."/>
            <person name="Hattori M."/>
            <person name="Aksoy S."/>
        </authorList>
    </citation>
    <scope>NUCLEOTIDE SEQUENCE [LARGE SCALE GENOMIC DNA]</scope>
</reference>
<organism>
    <name type="scientific">Wigglesworthia glossinidia brevipalpis</name>
    <dbReference type="NCBI Taxonomy" id="36870"/>
    <lineage>
        <taxon>Bacteria</taxon>
        <taxon>Pseudomonadati</taxon>
        <taxon>Pseudomonadota</taxon>
        <taxon>Gammaproteobacteria</taxon>
        <taxon>Enterobacterales</taxon>
        <taxon>Erwiniaceae</taxon>
        <taxon>Wigglesworthia</taxon>
    </lineage>
</organism>
<protein>
    <recommendedName>
        <fullName evidence="1">Thymidylate synthase</fullName>
        <shortName evidence="1">TS</shortName>
        <shortName evidence="1">TSase</shortName>
        <ecNumber evidence="1">2.1.1.45</ecNumber>
    </recommendedName>
</protein>
<name>TYSY_WIGBR</name>
<gene>
    <name evidence="1" type="primary">thyA</name>
    <name type="ordered locus">WIGBR3200</name>
</gene>
<comment type="function">
    <text evidence="1">Catalyzes the reductive methylation of 2'-deoxyuridine-5'-monophosphate (dUMP) to 2'-deoxythymidine-5'-monophosphate (dTMP) while utilizing 5,10-methylenetetrahydrofolate (mTHF) as the methyl donor and reductant in the reaction, yielding dihydrofolate (DHF) as a by-product. This enzymatic reaction provides an intracellular de novo source of dTMP, an essential precursor for DNA biosynthesis.</text>
</comment>
<comment type="catalytic activity">
    <reaction evidence="1">
        <text>dUMP + (6R)-5,10-methylene-5,6,7,8-tetrahydrofolate = 7,8-dihydrofolate + dTMP</text>
        <dbReference type="Rhea" id="RHEA:12104"/>
        <dbReference type="ChEBI" id="CHEBI:15636"/>
        <dbReference type="ChEBI" id="CHEBI:57451"/>
        <dbReference type="ChEBI" id="CHEBI:63528"/>
        <dbReference type="ChEBI" id="CHEBI:246422"/>
        <dbReference type="EC" id="2.1.1.45"/>
    </reaction>
</comment>
<comment type="pathway">
    <text evidence="1">Pyrimidine metabolism; dTTP biosynthesis.</text>
</comment>
<comment type="subunit">
    <text evidence="1">Homodimer.</text>
</comment>
<comment type="subcellular location">
    <subcellularLocation>
        <location evidence="1">Cytoplasm</location>
    </subcellularLocation>
</comment>
<comment type="similarity">
    <text evidence="1">Belongs to the thymidylate synthase family. Bacterial-type ThyA subfamily.</text>
</comment>